<reference key="1">
    <citation type="journal article" date="1999" name="Biochem. J.">
        <title>Cloning and sequencing of the cDNA species for mammalian dimeric dihydrodiol dehydrogenases.</title>
        <authorList>
            <person name="Arimitsu E."/>
            <person name="Aoki S."/>
            <person name="Ishikura S."/>
            <person name="Nakanishi K."/>
            <person name="Matsuura K."/>
            <person name="Hara A."/>
        </authorList>
    </citation>
    <scope>NUCLEOTIDE SEQUENCE [MRNA]</scope>
    <scope>PROTEIN SEQUENCE OF 44-80; 92-97; 99-105; 137-148; 174-180; 245-262; 267-290 AND 302-333</scope>
    <scope>SUBUNIT</scope>
    <scope>TISSUE SPECIFICITY</scope>
    <scope>ACTIVITY REGULATION</scope>
    <scope>BIOPHYSICOCHEMICAL PROPERTIES</scope>
    <source>
        <tissue>Kidney</tissue>
    </source>
</reference>
<reference key="2">
    <citation type="journal article" date="2000" name="Biochem. Biophys. Res. Commun.">
        <title>Roles of His-79 and Tyr-180 of D-xylose/dihydrodiol dehydrogenase in catalytic function.</title>
        <authorList>
            <person name="Asada Y."/>
            <person name="Aoki S."/>
            <person name="Ishikura S."/>
            <person name="Usami N."/>
            <person name="Hara A."/>
        </authorList>
    </citation>
    <scope>SUBUNIT</scope>
    <scope>ACTIVITY REGULATION</scope>
    <scope>MUTAGENESIS OF HIS-79 AND TYR-180</scope>
</reference>
<reference key="3">
    <citation type="journal article" date="2001" name="Chem. Biol. Interact.">
        <title>Identity of dimeric dihydrodiol dehydrogenase as NADP(+)-dependent D-xylose dehydrogenase in pig liver.</title>
        <authorList>
            <person name="Aoki S."/>
            <person name="Ishikura S."/>
            <person name="Asada Y."/>
            <person name="Usami N."/>
            <person name="Hara A."/>
        </authorList>
    </citation>
    <scope>ACTIVITY REGULATION</scope>
    <scope>BIOPHYSICOCHEMICAL PROPERTIES</scope>
    <source>
        <tissue>Kidney</tissue>
    </source>
</reference>
<gene>
    <name type="primary">DHDH</name>
    <name type="synonym">2DD</name>
</gene>
<feature type="chain" id="PRO_0000315363" description="Trans-1,2-dihydrobenzene-1,2-diol dehydrogenase">
    <location>
        <begin position="1"/>
        <end position="334"/>
    </location>
</feature>
<feature type="site" description="May play an important role in coenzyme binding" evidence="1">
    <location>
        <position position="71"/>
    </location>
</feature>
<feature type="site" description="May play an important role in coenzyme binding">
    <location>
        <position position="79"/>
    </location>
</feature>
<feature type="site" description="May play an important role in coenzyme binding" evidence="1">
    <location>
        <position position="97"/>
    </location>
</feature>
<feature type="site" description="May play an important role for the adaptation of the alcohol substrate into the binding site" evidence="1">
    <location>
        <position position="176"/>
    </location>
</feature>
<feature type="site" description="May play an important role in catalytic activity">
    <location>
        <position position="180"/>
    </location>
</feature>
<feature type="mutagenesis site" description="Decrease in K(d) and K(m) value for NADPH. Elimination of the fluorescence-energy transfer and enhancement of NADPH fluorescence by the binary complex formation. Potent inhibition of the dehydrogenase activity by high ionic strength." evidence="3">
    <original>H</original>
    <variation>E</variation>
    <location>
        <position position="79"/>
    </location>
</feature>
<feature type="mutagenesis site" description="Significant loss of activity. No effect on the high affinity for NADPH, fluorescence-energy transfer and enhancement of NADPH fluorescence by the binary complex formation." evidence="3">
    <original>Y</original>
    <variation>F</variation>
    <location>
        <position position="180"/>
    </location>
</feature>
<organism>
    <name type="scientific">Macaca fuscata fuscata</name>
    <name type="common">Japanese macaque</name>
    <dbReference type="NCBI Taxonomy" id="9543"/>
    <lineage>
        <taxon>Eukaryota</taxon>
        <taxon>Metazoa</taxon>
        <taxon>Chordata</taxon>
        <taxon>Craniata</taxon>
        <taxon>Vertebrata</taxon>
        <taxon>Euteleostomi</taxon>
        <taxon>Mammalia</taxon>
        <taxon>Eutheria</taxon>
        <taxon>Euarchontoglires</taxon>
        <taxon>Primates</taxon>
        <taxon>Haplorrhini</taxon>
        <taxon>Catarrhini</taxon>
        <taxon>Cercopithecidae</taxon>
        <taxon>Cercopithecinae</taxon>
        <taxon>Macaca</taxon>
    </lineage>
</organism>
<dbReference type="EC" id="1.3.1.20"/>
<dbReference type="EC" id="1.1.1.179"/>
<dbReference type="EMBL" id="AB021931">
    <property type="protein sequence ID" value="BAA83488.1"/>
    <property type="molecule type" value="mRNA"/>
</dbReference>
<dbReference type="SMR" id="Q7JK39"/>
<dbReference type="SABIO-RK" id="Q7JK39"/>
<dbReference type="GO" id="GO:0047837">
    <property type="term" value="F:D-xylose 1-dehydrogenase (NADP+) activity"/>
    <property type="evidence" value="ECO:0007669"/>
    <property type="project" value="UniProtKB-EC"/>
</dbReference>
<dbReference type="GO" id="GO:0000166">
    <property type="term" value="F:nucleotide binding"/>
    <property type="evidence" value="ECO:0007669"/>
    <property type="project" value="InterPro"/>
</dbReference>
<dbReference type="GO" id="GO:0047115">
    <property type="term" value="F:trans-1,2-dihydrobenzene-1,2-diol dehydrogenase activity"/>
    <property type="evidence" value="ECO:0007669"/>
    <property type="project" value="UniProtKB-EC"/>
</dbReference>
<dbReference type="GO" id="GO:0042843">
    <property type="term" value="P:D-xylose catabolic process"/>
    <property type="evidence" value="ECO:0007669"/>
    <property type="project" value="TreeGrafter"/>
</dbReference>
<dbReference type="FunFam" id="3.30.360.10:FF:000031">
    <property type="entry name" value="Trans-1,2-dihydrobenzene-1,2-diol dehydrogenase"/>
    <property type="match status" value="1"/>
</dbReference>
<dbReference type="FunFam" id="3.40.50.720:FF:000269">
    <property type="entry name" value="Trans-1,2-dihydrobenzene-1,2-diol dehydrogenase"/>
    <property type="match status" value="1"/>
</dbReference>
<dbReference type="Gene3D" id="3.30.360.10">
    <property type="entry name" value="Dihydrodipicolinate Reductase, domain 2"/>
    <property type="match status" value="1"/>
</dbReference>
<dbReference type="Gene3D" id="3.40.50.720">
    <property type="entry name" value="NAD(P)-binding Rossmann-like Domain"/>
    <property type="match status" value="1"/>
</dbReference>
<dbReference type="InterPro" id="IPR000683">
    <property type="entry name" value="Gfo/Idh/MocA-like_OxRdtase_N"/>
</dbReference>
<dbReference type="InterPro" id="IPR050984">
    <property type="entry name" value="Gfo/Idh/MocA_domain"/>
</dbReference>
<dbReference type="InterPro" id="IPR055170">
    <property type="entry name" value="GFO_IDH_MocA-like_dom"/>
</dbReference>
<dbReference type="InterPro" id="IPR036291">
    <property type="entry name" value="NAD(P)-bd_dom_sf"/>
</dbReference>
<dbReference type="PANTHER" id="PTHR22604">
    <property type="entry name" value="OXIDOREDUCTASES"/>
    <property type="match status" value="1"/>
</dbReference>
<dbReference type="PANTHER" id="PTHR22604:SF105">
    <property type="entry name" value="TRANS-1,2-DIHYDROBENZENE-1,2-DIOL DEHYDROGENASE"/>
    <property type="match status" value="1"/>
</dbReference>
<dbReference type="Pfam" id="PF01408">
    <property type="entry name" value="GFO_IDH_MocA"/>
    <property type="match status" value="1"/>
</dbReference>
<dbReference type="Pfam" id="PF22725">
    <property type="entry name" value="GFO_IDH_MocA_C3"/>
    <property type="match status" value="1"/>
</dbReference>
<dbReference type="SUPFAM" id="SSF55347">
    <property type="entry name" value="Glyceraldehyde-3-phosphate dehydrogenase-like, C-terminal domain"/>
    <property type="match status" value="1"/>
</dbReference>
<dbReference type="SUPFAM" id="SSF51735">
    <property type="entry name" value="NAD(P)-binding Rossmann-fold domains"/>
    <property type="match status" value="1"/>
</dbReference>
<name>DHDH_MACFU</name>
<evidence type="ECO:0000250" key="1"/>
<evidence type="ECO:0000269" key="2">
    <source>
    </source>
</evidence>
<evidence type="ECO:0000269" key="3">
    <source>
    </source>
</evidence>
<evidence type="ECO:0000269" key="4">
    <source>
    </source>
</evidence>
<evidence type="ECO:0000305" key="5"/>
<keyword id="KW-0903">Direct protein sequencing</keyword>
<keyword id="KW-0521">NADP</keyword>
<keyword id="KW-0560">Oxidoreductase</keyword>
<accession>Q7JK39</accession>
<sequence>MALRWGIVSVGLISSDFTAVLQTLPRSEHQVVAVAARDLSRAKEFAQKHDIPKAYGSYEELAKDPNVEVAYVGTQHPQHKAAVMLCLAAGKAVLCEKPMGVNAAEVREMVTEARSRGLFLMEAIWTRFFPASEALRSVLAQGTLGDLRVARAEFGKNLTHVPRAVDWAQAGGALLDLGIYCVQFISMVFGGQKPEKISVMGRRHETGVDDTVTVLLQYPGEVHGSFTCSITAQLSNTASVSGTKGMAQLLNPCWCPTELVVKGEHKEFLLPPVPKNCNFDNGAGMSYEAKHVRECLRKGLKESPVIPLVESELLADILEEVRRAIGVTFPQDKH</sequence>
<comment type="catalytic activity">
    <reaction>
        <text>(1R,2R)-1,2-dihydrobenzene-1,2-diol + NADP(+) = catechol + NADPH + H(+)</text>
        <dbReference type="Rhea" id="RHEA:16729"/>
        <dbReference type="ChEBI" id="CHEBI:10702"/>
        <dbReference type="ChEBI" id="CHEBI:15378"/>
        <dbReference type="ChEBI" id="CHEBI:18135"/>
        <dbReference type="ChEBI" id="CHEBI:57783"/>
        <dbReference type="ChEBI" id="CHEBI:58349"/>
        <dbReference type="EC" id="1.3.1.20"/>
    </reaction>
</comment>
<comment type="catalytic activity">
    <reaction>
        <text>D-xylose + NADP(+) = D-xylono-1,5-lactone + NADPH + H(+)</text>
        <dbReference type="Rhea" id="RHEA:22000"/>
        <dbReference type="ChEBI" id="CHEBI:15378"/>
        <dbReference type="ChEBI" id="CHEBI:15867"/>
        <dbReference type="ChEBI" id="CHEBI:53455"/>
        <dbReference type="ChEBI" id="CHEBI:57783"/>
        <dbReference type="ChEBI" id="CHEBI:58349"/>
        <dbReference type="EC" id="1.1.1.179"/>
    </reaction>
</comment>
<comment type="activity regulation">
    <text evidence="2 3 4">Strongly inhibited by isoascorbic acid, 4-hydroxyacetophenone and chloromercuriphenylsulphonate. Stimulated by various salts.</text>
</comment>
<comment type="biophysicochemical properties">
    <kinetics>
        <KM evidence="2 4">2.6 mM for naphthalene dihydrodiol (at pH 10.0)</KM>
        <KM evidence="2 4">0.9 mM for benzene dihydrodiol (at pH 10.0)</KM>
        <KM evidence="2 4">1.2 mM for 3-deoxyglucosone (at pH 7.5)</KM>
        <KM evidence="2 4">0.12 mM for camphorquinone (at pH 7.5)</KM>
        <KM evidence="2 4">1.3 mM for methylglyoxal (at pH 7.5)</KM>
        <KM evidence="2 4">6.4 mM for D-xylose (at pH 7.5)</KM>
        <KM evidence="2 4">29 mM for D-glucose (at pH 7.5)</KM>
        <Vmax evidence="2 4">36.0 umol/min/mg enzyme with naphthalene dihydrodiol as substrate (at pH 10.0)</Vmax>
        <Vmax evidence="2 4">16.0 umol/min/mg enzyme with benzene dihydrodiol as substrate (at pH 10.0)</Vmax>
        <Vmax evidence="2 4">17.0 umol/min/mg enzyme with reduced 3-deoxyglucosone as substrate (at pH 7.5)</Vmax>
        <Vmax evidence="2 4">34.0 umol/min/mg enzyme with camphorquinone as substrate (at pH 7.5)</Vmax>
        <Vmax evidence="2 4">10.0 umol/min/mg enzyme with methylglyoxal as substrate (at pH 7.5)</Vmax>
        <Vmax evidence="2 4">9.0 umol/min/mg enzyme with D-xylose as substrate (at pH 7.5)</Vmax>
        <Vmax evidence="2 4">1.1 umol/min/mg enzyme with D-glucose as substrate (at pH 7.5)</Vmax>
    </kinetics>
</comment>
<comment type="subunit">
    <text evidence="2 3">Homodimer.</text>
</comment>
<comment type="tissue specificity">
    <text evidence="2">Kidney.</text>
</comment>
<comment type="similarity">
    <text evidence="5">Belongs to the Gfo/Idh/MocA family.</text>
</comment>
<proteinExistence type="evidence at protein level"/>
<protein>
    <recommendedName>
        <fullName>Trans-1,2-dihydrobenzene-1,2-diol dehydrogenase</fullName>
        <ecNumber>1.3.1.20</ecNumber>
    </recommendedName>
    <alternativeName>
        <fullName>D-xylose 1-dehydrogenase</fullName>
    </alternativeName>
    <alternativeName>
        <fullName>D-xylose-NADP dehydrogenase</fullName>
        <ecNumber>1.1.1.179</ecNumber>
    </alternativeName>
    <alternativeName>
        <fullName>Dimeric dihydrodiol dehydrogenase</fullName>
    </alternativeName>
    <alternativeName>
        <fullName>Jmo2DD</fullName>
    </alternativeName>
</protein>